<reference key="1">
    <citation type="submission" date="2007-08" db="EMBL/GenBank/DDBJ databases">
        <authorList>
            <consortium name="The Citrobacter koseri Genome Sequencing Project"/>
            <person name="McClelland M."/>
            <person name="Sanderson E.K."/>
            <person name="Porwollik S."/>
            <person name="Spieth J."/>
            <person name="Clifton W.S."/>
            <person name="Latreille P."/>
            <person name="Courtney L."/>
            <person name="Wang C."/>
            <person name="Pepin K."/>
            <person name="Bhonagiri V."/>
            <person name="Nash W."/>
            <person name="Johnson M."/>
            <person name="Thiruvilangam P."/>
            <person name="Wilson R."/>
        </authorList>
    </citation>
    <scope>NUCLEOTIDE SEQUENCE [LARGE SCALE GENOMIC DNA]</scope>
    <source>
        <strain>ATCC BAA-895 / CDC 4225-83 / SGSC4696</strain>
    </source>
</reference>
<feature type="chain" id="PRO_1000084135" description="NAD(P)H dehydrogenase (quinone)">
    <location>
        <begin position="1"/>
        <end position="198"/>
    </location>
</feature>
<feature type="domain" description="Flavodoxin-like" evidence="1">
    <location>
        <begin position="4"/>
        <end position="189"/>
    </location>
</feature>
<feature type="binding site" evidence="1">
    <location>
        <begin position="10"/>
        <end position="15"/>
    </location>
    <ligand>
        <name>FMN</name>
        <dbReference type="ChEBI" id="CHEBI:58210"/>
    </ligand>
</feature>
<feature type="binding site" evidence="1">
    <location>
        <position position="12"/>
    </location>
    <ligand>
        <name>NAD(+)</name>
        <dbReference type="ChEBI" id="CHEBI:57540"/>
    </ligand>
</feature>
<feature type="binding site" evidence="1">
    <location>
        <begin position="78"/>
        <end position="80"/>
    </location>
    <ligand>
        <name>FMN</name>
        <dbReference type="ChEBI" id="CHEBI:58210"/>
    </ligand>
</feature>
<feature type="binding site" evidence="1">
    <location>
        <position position="98"/>
    </location>
    <ligand>
        <name>substrate</name>
    </ligand>
</feature>
<feature type="binding site" evidence="1">
    <location>
        <begin position="113"/>
        <end position="118"/>
    </location>
    <ligand>
        <name>FMN</name>
        <dbReference type="ChEBI" id="CHEBI:58210"/>
    </ligand>
</feature>
<feature type="binding site" evidence="1">
    <location>
        <position position="133"/>
    </location>
    <ligand>
        <name>FMN</name>
        <dbReference type="ChEBI" id="CHEBI:58210"/>
    </ligand>
</feature>
<sequence length="198" mass="20895">MAKILVLYYSMYGHIETMAHAVAEGANKVDGAEVVIKRVPETMQPEIFAKAGGKTQNAPVATPQELPDYDAIIFGTPTRFGNMSGQMRTFLDQTGGLWASGALYGKLASVFSSTGTGGGQEQTITSTWTTLAHHGMVIVPIGYAAQELFDVSQVRGGTPYGATTIAGGDGSRQPSQEELSIARYQGEYVAGLAVKLNG</sequence>
<dbReference type="EC" id="1.6.5.2" evidence="1"/>
<dbReference type="EMBL" id="CP000822">
    <property type="protein sequence ID" value="ABV13172.1"/>
    <property type="molecule type" value="Genomic_DNA"/>
</dbReference>
<dbReference type="SMR" id="A8AI59"/>
<dbReference type="STRING" id="290338.CKO_02047"/>
<dbReference type="CAZy" id="AA6">
    <property type="family name" value="Auxiliary Activities 6"/>
</dbReference>
<dbReference type="GeneID" id="45136007"/>
<dbReference type="KEGG" id="cko:CKO_02047"/>
<dbReference type="HOGENOM" id="CLU_051402_0_2_6"/>
<dbReference type="OrthoDB" id="9801479at2"/>
<dbReference type="Proteomes" id="UP000008148">
    <property type="component" value="Chromosome"/>
</dbReference>
<dbReference type="GO" id="GO:0016020">
    <property type="term" value="C:membrane"/>
    <property type="evidence" value="ECO:0007669"/>
    <property type="project" value="TreeGrafter"/>
</dbReference>
<dbReference type="GO" id="GO:0050660">
    <property type="term" value="F:flavin adenine dinucleotide binding"/>
    <property type="evidence" value="ECO:0007669"/>
    <property type="project" value="UniProtKB-UniRule"/>
</dbReference>
<dbReference type="GO" id="GO:0010181">
    <property type="term" value="F:FMN binding"/>
    <property type="evidence" value="ECO:0007669"/>
    <property type="project" value="InterPro"/>
</dbReference>
<dbReference type="GO" id="GO:0051287">
    <property type="term" value="F:NAD binding"/>
    <property type="evidence" value="ECO:0007669"/>
    <property type="project" value="UniProtKB-UniRule"/>
</dbReference>
<dbReference type="GO" id="GO:0050136">
    <property type="term" value="F:NADH:ubiquinone reductase (non-electrogenic) activity"/>
    <property type="evidence" value="ECO:0007669"/>
    <property type="project" value="RHEA"/>
</dbReference>
<dbReference type="GO" id="GO:0050661">
    <property type="term" value="F:NADP binding"/>
    <property type="evidence" value="ECO:0007669"/>
    <property type="project" value="UniProtKB-UniRule"/>
</dbReference>
<dbReference type="GO" id="GO:0008753">
    <property type="term" value="F:NADPH dehydrogenase (quinone) activity"/>
    <property type="evidence" value="ECO:0007669"/>
    <property type="project" value="RHEA"/>
</dbReference>
<dbReference type="FunFam" id="3.40.50.360:FF:000004">
    <property type="entry name" value="NAD(P)H dehydrogenase (quinone)"/>
    <property type="match status" value="1"/>
</dbReference>
<dbReference type="Gene3D" id="3.40.50.360">
    <property type="match status" value="1"/>
</dbReference>
<dbReference type="HAMAP" id="MF_01017">
    <property type="entry name" value="NQOR"/>
    <property type="match status" value="1"/>
</dbReference>
<dbReference type="InterPro" id="IPR008254">
    <property type="entry name" value="Flavodoxin/NO_synth"/>
</dbReference>
<dbReference type="InterPro" id="IPR029039">
    <property type="entry name" value="Flavoprotein-like_sf"/>
</dbReference>
<dbReference type="InterPro" id="IPR010089">
    <property type="entry name" value="Flavoprotein_WrbA-like"/>
</dbReference>
<dbReference type="InterPro" id="IPR005025">
    <property type="entry name" value="FMN_Rdtase-like_dom"/>
</dbReference>
<dbReference type="InterPro" id="IPR037513">
    <property type="entry name" value="NQO"/>
</dbReference>
<dbReference type="NCBIfam" id="TIGR01755">
    <property type="entry name" value="flav_wrbA"/>
    <property type="match status" value="1"/>
</dbReference>
<dbReference type="NCBIfam" id="NF002999">
    <property type="entry name" value="PRK03767.1"/>
    <property type="match status" value="1"/>
</dbReference>
<dbReference type="PANTHER" id="PTHR30546">
    <property type="entry name" value="FLAVODOXIN-RELATED PROTEIN WRBA-RELATED"/>
    <property type="match status" value="1"/>
</dbReference>
<dbReference type="PANTHER" id="PTHR30546:SF23">
    <property type="entry name" value="FLAVOPROTEIN-LIKE PROTEIN YCP4-RELATED"/>
    <property type="match status" value="1"/>
</dbReference>
<dbReference type="Pfam" id="PF03358">
    <property type="entry name" value="FMN_red"/>
    <property type="match status" value="1"/>
</dbReference>
<dbReference type="SUPFAM" id="SSF52218">
    <property type="entry name" value="Flavoproteins"/>
    <property type="match status" value="1"/>
</dbReference>
<dbReference type="PROSITE" id="PS50902">
    <property type="entry name" value="FLAVODOXIN_LIKE"/>
    <property type="match status" value="1"/>
</dbReference>
<accession>A8AI59</accession>
<name>NQOR_CITK8</name>
<gene>
    <name type="ordered locus">CKO_02047</name>
</gene>
<evidence type="ECO:0000255" key="1">
    <source>
        <dbReference type="HAMAP-Rule" id="MF_01017"/>
    </source>
</evidence>
<comment type="catalytic activity">
    <reaction evidence="1">
        <text>a quinone + NADH + H(+) = a quinol + NAD(+)</text>
        <dbReference type="Rhea" id="RHEA:46160"/>
        <dbReference type="ChEBI" id="CHEBI:15378"/>
        <dbReference type="ChEBI" id="CHEBI:24646"/>
        <dbReference type="ChEBI" id="CHEBI:57540"/>
        <dbReference type="ChEBI" id="CHEBI:57945"/>
        <dbReference type="ChEBI" id="CHEBI:132124"/>
        <dbReference type="EC" id="1.6.5.2"/>
    </reaction>
</comment>
<comment type="catalytic activity">
    <reaction evidence="1">
        <text>a quinone + NADPH + H(+) = a quinol + NADP(+)</text>
        <dbReference type="Rhea" id="RHEA:46164"/>
        <dbReference type="ChEBI" id="CHEBI:15378"/>
        <dbReference type="ChEBI" id="CHEBI:24646"/>
        <dbReference type="ChEBI" id="CHEBI:57783"/>
        <dbReference type="ChEBI" id="CHEBI:58349"/>
        <dbReference type="ChEBI" id="CHEBI:132124"/>
        <dbReference type="EC" id="1.6.5.2"/>
    </reaction>
</comment>
<comment type="cofactor">
    <cofactor evidence="1">
        <name>FMN</name>
        <dbReference type="ChEBI" id="CHEBI:58210"/>
    </cofactor>
    <text evidence="1">Binds 1 FMN per monomer.</text>
</comment>
<comment type="similarity">
    <text evidence="1">Belongs to the WrbA family.</text>
</comment>
<proteinExistence type="inferred from homology"/>
<organism>
    <name type="scientific">Citrobacter koseri (strain ATCC BAA-895 / CDC 4225-83 / SGSC4696)</name>
    <dbReference type="NCBI Taxonomy" id="290338"/>
    <lineage>
        <taxon>Bacteria</taxon>
        <taxon>Pseudomonadati</taxon>
        <taxon>Pseudomonadota</taxon>
        <taxon>Gammaproteobacteria</taxon>
        <taxon>Enterobacterales</taxon>
        <taxon>Enterobacteriaceae</taxon>
        <taxon>Citrobacter</taxon>
    </lineage>
</organism>
<protein>
    <recommendedName>
        <fullName evidence="1">NAD(P)H dehydrogenase (quinone)</fullName>
        <ecNumber evidence="1">1.6.5.2</ecNumber>
    </recommendedName>
    <alternativeName>
        <fullName>Flavoprotein WrbA</fullName>
    </alternativeName>
    <alternativeName>
        <fullName evidence="1">NAD(P)H:quinone oxidoreductase</fullName>
        <shortName evidence="1">NQO</shortName>
    </alternativeName>
</protein>
<keyword id="KW-0285">Flavoprotein</keyword>
<keyword id="KW-0288">FMN</keyword>
<keyword id="KW-0520">NAD</keyword>
<keyword id="KW-0521">NADP</keyword>
<keyword id="KW-0547">Nucleotide-binding</keyword>
<keyword id="KW-0560">Oxidoreductase</keyword>
<keyword id="KW-1185">Reference proteome</keyword>